<protein>
    <recommendedName>
        <fullName evidence="9">MYG1 exonuclease</fullName>
        <ecNumber evidence="8">3.1.-.-</ecNumber>
    </recommendedName>
</protein>
<comment type="function">
    <text evidence="6 10">3'-5' RNA exonuclease which cleaves in situ on specific transcripts in both nucleus and mitochondrion. Involved in regulating spatially segregated organellar RNA processing, acts as a coordinator of nucleo-mitochondrial crosstalk (PubMed:31081026). In nucleolus, processes pre-ribosomal RNA involved in ribosome assembly and alters cytoplasmic translation. In mitochondrial matrix, processes 3'-termini of the mito-ribosomal and messenger RNAs and controls translation of mitochondrial proteins (Probable).</text>
</comment>
<comment type="interaction">
    <interactant intactId="EBI-709754">
        <id>Q9HB07</id>
    </interactant>
    <interactant intactId="EBI-741181">
        <id>Q6RW13</id>
        <label>AGTRAP</label>
    </interactant>
    <organismsDiffer>false</organismsDiffer>
    <experiments>4</experiments>
</comment>
<comment type="interaction">
    <interactant intactId="EBI-709754">
        <id>Q9HB07</id>
    </interactant>
    <interactant intactId="EBI-11522760">
        <id>Q6RW13-2</id>
        <label>AGTRAP</label>
    </interactant>
    <organismsDiffer>false</organismsDiffer>
    <experiments>3</experiments>
</comment>
<comment type="interaction">
    <interactant intactId="EBI-709754">
        <id>Q9HB07</id>
    </interactant>
    <interactant intactId="EBI-11107920">
        <id>P49419-2</id>
        <label>ALDH7A1</label>
    </interactant>
    <organismsDiffer>false</organismsDiffer>
    <experiments>3</experiments>
</comment>
<comment type="interaction">
    <interactant intactId="EBI-709754">
        <id>Q9HB07</id>
    </interactant>
    <interactant intactId="EBI-11978055">
        <id>Q10567-3</id>
        <label>AP1B1</label>
    </interactant>
    <organismsDiffer>false</organismsDiffer>
    <experiments>3</experiments>
</comment>
<comment type="interaction">
    <interactant intactId="EBI-709754">
        <id>Q9HB07</id>
    </interactant>
    <interactant intactId="EBI-3936819">
        <id>Q6Q788</id>
        <label>APOA5</label>
    </interactant>
    <organismsDiffer>false</organismsDiffer>
    <experiments>3</experiments>
</comment>
<comment type="interaction">
    <interactant intactId="EBI-709754">
        <id>Q9HB07</id>
    </interactant>
    <interactant intactId="EBI-714543">
        <id>Q15041</id>
        <label>ARL6IP1</label>
    </interactant>
    <organismsDiffer>false</organismsDiffer>
    <experiments>6</experiments>
</comment>
<comment type="interaction">
    <interactant intactId="EBI-709754">
        <id>Q9HB07</id>
    </interactant>
    <interactant intactId="EBI-7996695">
        <id>Q8WZ55</id>
        <label>BSND</label>
    </interactant>
    <organismsDiffer>false</organismsDiffer>
    <experiments>3</experiments>
</comment>
<comment type="interaction">
    <interactant intactId="EBI-709754">
        <id>Q9HB07</id>
    </interactant>
    <interactant intactId="EBI-3913685">
        <id>O95674</id>
        <label>CDS2</label>
    </interactant>
    <organismsDiffer>false</organismsDiffer>
    <experiments>3</experiments>
</comment>
<comment type="interaction">
    <interactant intactId="EBI-709754">
        <id>Q9HB07</id>
    </interactant>
    <interactant intactId="EBI-2548702">
        <id>Q96DZ9</id>
        <label>CMTM5</label>
    </interactant>
    <organismsDiffer>false</organismsDiffer>
    <experiments>4</experiments>
</comment>
<comment type="interaction">
    <interactant intactId="EBI-709754">
        <id>Q9HB07</id>
    </interactant>
    <interactant intactId="EBI-11522780">
        <id>Q96DZ9-2</id>
        <label>CMTM5</label>
    </interactant>
    <organismsDiffer>false</organismsDiffer>
    <experiments>3</experiments>
</comment>
<comment type="interaction">
    <interactant intactId="EBI-709754">
        <id>Q9HB07</id>
    </interactant>
    <interactant intactId="EBI-2689453">
        <id>Q6PUV4</id>
        <label>CPLX2</label>
    </interactant>
    <organismsDiffer>false</organismsDiffer>
    <experiments>3</experiments>
</comment>
<comment type="interaction">
    <interactant intactId="EBI-709754">
        <id>Q9HB07</id>
    </interactant>
    <interactant intactId="EBI-723230">
        <id>Q5QP82</id>
        <label>DCAF10</label>
    </interactant>
    <organismsDiffer>false</organismsDiffer>
    <experiments>3</experiments>
</comment>
<comment type="interaction">
    <interactant intactId="EBI-709754">
        <id>Q9HB07</id>
    </interactant>
    <interactant intactId="EBI-10303987">
        <id>Q9UHG0</id>
        <label>DCDC2</label>
    </interactant>
    <organismsDiffer>false</organismsDiffer>
    <experiments>3</experiments>
</comment>
<comment type="interaction">
    <interactant intactId="EBI-709754">
        <id>Q9HB07</id>
    </interactant>
    <interactant intactId="EBI-742054">
        <id>Q96D03</id>
        <label>DDIT4L</label>
    </interactant>
    <organismsDiffer>false</organismsDiffer>
    <experiments>3</experiments>
</comment>
<comment type="interaction">
    <interactant intactId="EBI-709754">
        <id>Q9HB07</id>
    </interactant>
    <interactant intactId="EBI-12878374">
        <id>Q9BSY9</id>
        <label>DESI2</label>
    </interactant>
    <organismsDiffer>false</organismsDiffer>
    <experiments>3</experiments>
</comment>
<comment type="interaction">
    <interactant intactId="EBI-709754">
        <id>Q9HB07</id>
    </interactant>
    <interactant intactId="EBI-12831978">
        <id>Q6ZPD8</id>
        <label>DGAT2L6</label>
    </interactant>
    <organismsDiffer>false</organismsDiffer>
    <experiments>3</experiments>
</comment>
<comment type="interaction">
    <interactant intactId="EBI-709754">
        <id>Q9HB07</id>
    </interactant>
    <interactant intactId="EBI-351467">
        <id>P26641</id>
        <label>EEF1G</label>
    </interactant>
    <organismsDiffer>false</organismsDiffer>
    <experiments>3</experiments>
</comment>
<comment type="interaction">
    <interactant intactId="EBI-709754">
        <id>Q9HB07</id>
    </interactant>
    <interactant intactId="EBI-781551">
        <id>Q9Y282</id>
        <label>ERGIC3</label>
    </interactant>
    <organismsDiffer>false</organismsDiffer>
    <experiments>3</experiments>
</comment>
<comment type="interaction">
    <interactant intactId="EBI-709754">
        <id>Q9HB07</id>
    </interactant>
    <interactant intactId="EBI-10175124">
        <id>Q8IZU0</id>
        <label>FAM9B</label>
    </interactant>
    <organismsDiffer>false</organismsDiffer>
    <experiments>4</experiments>
</comment>
<comment type="interaction">
    <interactant intactId="EBI-709754">
        <id>Q9HB07</id>
    </interactant>
    <interactant intactId="EBI-372506">
        <id>Q8TAE8</id>
        <label>GADD45GIP1</label>
    </interactant>
    <organismsDiffer>false</organismsDiffer>
    <experiments>3</experiments>
</comment>
<comment type="interaction">
    <interactant intactId="EBI-709754">
        <id>Q9HB07</id>
    </interactant>
    <interactant intactId="EBI-401755">
        <id>P62993</id>
        <label>GRB2</label>
    </interactant>
    <organismsDiffer>false</organismsDiffer>
    <experiments>3</experiments>
</comment>
<comment type="interaction">
    <interactant intactId="EBI-709754">
        <id>Q9HB07</id>
    </interactant>
    <interactant intactId="EBI-12165207">
        <id>Q86X24</id>
        <label>HORMAD1</label>
    </interactant>
    <organismsDiffer>false</organismsDiffer>
    <experiments>3</experiments>
</comment>
<comment type="interaction">
    <interactant intactId="EBI-709754">
        <id>Q9HB07</id>
    </interactant>
    <interactant intactId="EBI-944295">
        <id>Q969L2</id>
        <label>MAL2</label>
    </interactant>
    <organismsDiffer>false</organismsDiffer>
    <experiments>3</experiments>
</comment>
<comment type="interaction">
    <interactant intactId="EBI-709754">
        <id>Q9HB07</id>
    </interactant>
    <interactant intactId="EBI-7260764">
        <id>Q9NR34</id>
        <label>MAN1C1</label>
    </interactant>
    <organismsDiffer>false</organismsDiffer>
    <experiments>3</experiments>
</comment>
<comment type="interaction">
    <interactant intactId="EBI-709754">
        <id>Q9HB07</id>
    </interactant>
    <interactant intactId="EBI-2804879">
        <id>Q9H1A3</id>
        <label>METTL9</label>
    </interactant>
    <organismsDiffer>false</organismsDiffer>
    <experiments>3</experiments>
</comment>
<comment type="interaction">
    <interactant intactId="EBI-709754">
        <id>Q9HB07</id>
    </interactant>
    <interactant intactId="EBI-2872520">
        <id>Q9BSJ5</id>
        <label>MTNAP1</label>
    </interactant>
    <organismsDiffer>false</organismsDiffer>
    <experiments>3</experiments>
</comment>
<comment type="interaction">
    <interactant intactId="EBI-709754">
        <id>Q9HB07</id>
    </interactant>
    <interactant intactId="EBI-1043580">
        <id>Q9BRX2</id>
        <label>PELO</label>
    </interactant>
    <organismsDiffer>false</organismsDiffer>
    <experiments>3</experiments>
</comment>
<comment type="interaction">
    <interactant intactId="EBI-709754">
        <id>Q9HB07</id>
    </interactant>
    <interactant intactId="EBI-725795">
        <id>O60664</id>
        <label>PLIN3</label>
    </interactant>
    <organismsDiffer>false</organismsDiffer>
    <experiments>3</experiments>
</comment>
<comment type="interaction">
    <interactant intactId="EBI-709754">
        <id>Q9HB07</id>
    </interactant>
    <interactant intactId="EBI-14210385">
        <id>Q59EV6</id>
        <label>PPGB</label>
    </interactant>
    <organismsDiffer>false</organismsDiffer>
    <experiments>3</experiments>
</comment>
<comment type="interaction">
    <interactant intactId="EBI-709754">
        <id>Q9HB07</id>
    </interactant>
    <interactant intactId="EBI-741332">
        <id>P57052</id>
        <label>RBM11</label>
    </interactant>
    <organismsDiffer>false</organismsDiffer>
    <experiments>3</experiments>
</comment>
<comment type="interaction">
    <interactant intactId="EBI-709754">
        <id>Q9HB07</id>
    </interactant>
    <interactant intactId="EBI-14065960">
        <id>Q96HR9-2</id>
        <label>REEP6</label>
    </interactant>
    <organismsDiffer>false</organismsDiffer>
    <experiments>3</experiments>
</comment>
<comment type="interaction">
    <interactant intactId="EBI-709754">
        <id>Q9HB07</id>
    </interactant>
    <interactant intactId="EBI-17589229">
        <id>Q6NTF9-3</id>
        <label>RHBDD2</label>
    </interactant>
    <organismsDiffer>false</organismsDiffer>
    <experiments>3</experiments>
</comment>
<comment type="interaction">
    <interactant intactId="EBI-709754">
        <id>Q9HB07</id>
    </interactant>
    <interactant intactId="EBI-9395257">
        <id>Q03395</id>
        <label>ROM1</label>
    </interactant>
    <organismsDiffer>false</organismsDiffer>
    <experiments>3</experiments>
</comment>
<comment type="interaction">
    <interactant intactId="EBI-709754">
        <id>Q9HB07</id>
    </interactant>
    <interactant intactId="EBI-748576">
        <id>P28702</id>
        <label>RXRB</label>
    </interactant>
    <organismsDiffer>false</organismsDiffer>
    <experiments>3</experiments>
</comment>
<comment type="interaction">
    <interactant intactId="EBI-709754">
        <id>Q9HB07</id>
    </interactant>
    <interactant intactId="EBI-2854842">
        <id>Q8WV19</id>
        <label>SFT2D1</label>
    </interactant>
    <organismsDiffer>false</organismsDiffer>
    <experiments>3</experiments>
</comment>
<comment type="interaction">
    <interactant intactId="EBI-709754">
        <id>Q9HB07</id>
    </interactant>
    <interactant intactId="EBI-3940816">
        <id>Q9BYT1</id>
        <label>SLC17A9</label>
    </interactant>
    <organismsDiffer>false</organismsDiffer>
    <experiments>3</experiments>
</comment>
<comment type="interaction">
    <interactant intactId="EBI-709754">
        <id>Q9HB07</id>
    </interactant>
    <interactant intactId="EBI-742688">
        <id>Q9NZD8</id>
        <label>SPG21</label>
    </interactant>
    <organismsDiffer>false</organismsDiffer>
    <experiments>3</experiments>
</comment>
<comment type="interaction">
    <interactant intactId="EBI-709754">
        <id>Q9HB07</id>
    </interactant>
    <interactant intactId="EBI-12187159">
        <id>O43759-2</id>
        <label>SYNGR1</label>
    </interactant>
    <organismsDiffer>false</organismsDiffer>
    <experiments>3</experiments>
</comment>
<comment type="interaction">
    <interactant intactId="EBI-709754">
        <id>Q9HB07</id>
    </interactant>
    <interactant intactId="EBI-9071725">
        <id>P08247</id>
        <label>SYP</label>
    </interactant>
    <organismsDiffer>false</organismsDiffer>
    <experiments>3</experiments>
</comment>
<comment type="interaction">
    <interactant intactId="EBI-709754">
        <id>Q9HB07</id>
    </interactant>
    <interactant intactId="EBI-2372529">
        <id>O60830</id>
        <label>TIMM17B</label>
    </interactant>
    <organismsDiffer>false</organismsDiffer>
    <experiments>3</experiments>
</comment>
<comment type="interaction">
    <interactant intactId="EBI-709754">
        <id>Q9HB07</id>
    </interactant>
    <interactant intactId="EBI-12947623">
        <id>Q96MV1</id>
        <label>TLCD4</label>
    </interactant>
    <organismsDiffer>false</organismsDiffer>
    <experiments>3</experiments>
</comment>
<comment type="interaction">
    <interactant intactId="EBI-709754">
        <id>Q9HB07</id>
    </interactant>
    <interactant intactId="EBI-12195227">
        <id>Q8NBD8</id>
        <label>TMEM229B</label>
    </interactant>
    <organismsDiffer>false</organismsDiffer>
    <experiments>3</experiments>
</comment>
<comment type="interaction">
    <interactant intactId="EBI-709754">
        <id>Q9HB07</id>
    </interactant>
    <interactant intactId="EBI-9675724">
        <id>Q8WW34</id>
        <label>TMEM239</label>
    </interactant>
    <organismsDiffer>false</organismsDiffer>
    <experiments>3</experiments>
</comment>
<comment type="interaction">
    <interactant intactId="EBI-709754">
        <id>Q9HB07</id>
    </interactant>
    <interactant intactId="EBI-12003398">
        <id>Q9H2S6-2</id>
        <label>TNMD</label>
    </interactant>
    <organismsDiffer>false</organismsDiffer>
    <experiments>3</experiments>
</comment>
<comment type="interaction">
    <interactant intactId="EBI-709754">
        <id>Q9HB07</id>
    </interactant>
    <interactant intactId="EBI-12040603">
        <id>Q9NZC7-5</id>
        <label>WWOX</label>
    </interactant>
    <organismsDiffer>false</organismsDiffer>
    <experiments>3</experiments>
</comment>
<comment type="interaction">
    <interactant intactId="EBI-709754">
        <id>Q9HB07</id>
    </interactant>
    <interactant intactId="EBI-2799703">
        <id>O95070</id>
        <label>YIF1A</label>
    </interactant>
    <organismsDiffer>false</organismsDiffer>
    <experiments>3</experiments>
</comment>
<comment type="subcellular location">
    <subcellularLocation>
        <location evidence="3 4">Nucleus</location>
        <location evidence="3 4">Nucleoplasm</location>
    </subcellularLocation>
    <subcellularLocation>
        <location evidence="3 4">Mitochondrion matrix</location>
    </subcellularLocation>
    <subcellularLocation>
        <location evidence="1">Nucleus</location>
        <location evidence="1">Nucleolus</location>
    </subcellularLocation>
</comment>
<comment type="tissue specificity">
    <text evidence="3">Ubiquitously expressed, with highest levels in testis.</text>
</comment>
<comment type="disease">
    <text evidence="4 5 6">Several works have found that mRNA expression is elevated in the skin of vitiligo patients.</text>
</comment>
<comment type="similarity">
    <text evidence="9">Belongs to the MYG1 family.</text>
</comment>
<evidence type="ECO:0000250" key="1">
    <source>
        <dbReference type="UniProtKB" id="Q9JK81"/>
    </source>
</evidence>
<evidence type="ECO:0000255" key="2"/>
<evidence type="ECO:0000269" key="3">
    <source>
    </source>
</evidence>
<evidence type="ECO:0000269" key="4">
    <source>
    </source>
</evidence>
<evidence type="ECO:0000269" key="5">
    <source>
    </source>
</evidence>
<evidence type="ECO:0000269" key="6">
    <source>
    </source>
</evidence>
<evidence type="ECO:0000269" key="7">
    <source ref="1"/>
</evidence>
<evidence type="ECO:0000303" key="8">
    <source>
    </source>
</evidence>
<evidence type="ECO:0000305" key="9"/>
<evidence type="ECO:0000305" key="10">
    <source>
    </source>
</evidence>
<evidence type="ECO:0000312" key="11">
    <source>
        <dbReference type="EMBL" id="AAH51871.1"/>
    </source>
</evidence>
<evidence type="ECO:0000312" key="12">
    <source>
        <dbReference type="HGNC" id="HGNC:17590"/>
    </source>
</evidence>
<evidence type="ECO:0007744" key="13">
    <source>
    </source>
</evidence>
<evidence type="ECO:0007744" key="14">
    <source>
    </source>
</evidence>
<organism>
    <name type="scientific">Homo sapiens</name>
    <name type="common">Human</name>
    <dbReference type="NCBI Taxonomy" id="9606"/>
    <lineage>
        <taxon>Eukaryota</taxon>
        <taxon>Metazoa</taxon>
        <taxon>Chordata</taxon>
        <taxon>Craniata</taxon>
        <taxon>Vertebrata</taxon>
        <taxon>Euteleostomi</taxon>
        <taxon>Mammalia</taxon>
        <taxon>Eutheria</taxon>
        <taxon>Euarchontoglires</taxon>
        <taxon>Primates</taxon>
        <taxon>Haplorrhini</taxon>
        <taxon>Catarrhini</taxon>
        <taxon>Hominidae</taxon>
        <taxon>Homo</taxon>
    </lineage>
</organism>
<feature type="transit peptide" description="Mitochondrion" evidence="2">
    <location>
        <begin position="1"/>
        <end position="47"/>
    </location>
</feature>
<feature type="chain" id="PRO_0000213483" description="MYG1 exonuclease">
    <location>
        <begin position="48"/>
        <end position="376"/>
    </location>
</feature>
<feature type="modified residue" description="Phosphoserine" evidence="14">
    <location>
        <position position="120"/>
    </location>
</feature>
<feature type="modified residue" description="N6-acetyllysine" evidence="13">
    <location>
        <position position="267"/>
    </location>
</feature>
<feature type="modified residue" description="N6-acetyllysine" evidence="1">
    <location>
        <position position="273"/>
    </location>
</feature>
<feature type="sequence variant" id="VAR_083553" description="Loss of mitochondrial location; dbSNP:rs1534284." evidence="4">
    <original>R</original>
    <variation>Q</variation>
    <location>
        <position position="4"/>
    </location>
</feature>
<feature type="sequence variant" id="VAR_059854" description="In dbSNP:rs1534282." evidence="7">
    <original>I</original>
    <variation>T</variation>
    <location>
        <position position="349"/>
    </location>
</feature>
<feature type="mutagenesis site" description="Catalytically inactive." evidence="6">
    <original>DHH</original>
    <variation>AAL</variation>
    <location>
        <begin position="106"/>
        <end position="108"/>
    </location>
</feature>
<feature type="mutagenesis site" description="Loss of RNase activity and gained single stranded DNase activity." evidence="6">
    <original>H</original>
    <variation>Q</variation>
    <location>
        <position position="344"/>
    </location>
</feature>
<feature type="sequence conflict" description="In Ref. 1; AAG17847." evidence="9" ref="1">
    <original>T</original>
    <variation>P</variation>
    <location>
        <position position="150"/>
    </location>
</feature>
<feature type="sequence conflict" description="In Ref. 1; AAG17847." evidence="9" ref="1">
    <original>R</original>
    <variation>P</variation>
    <location>
        <position position="353"/>
    </location>
</feature>
<gene>
    <name evidence="12" type="primary">MYG1</name>
    <name type="synonym">C12orf10</name>
</gene>
<keyword id="KW-0007">Acetylation</keyword>
<keyword id="KW-0378">Hydrolase</keyword>
<keyword id="KW-0496">Mitochondrion</keyword>
<keyword id="KW-0540">Nuclease</keyword>
<keyword id="KW-0539">Nucleus</keyword>
<keyword id="KW-0597">Phosphoprotein</keyword>
<keyword id="KW-1267">Proteomics identification</keyword>
<keyword id="KW-1185">Reference proteome</keyword>
<keyword id="KW-0809">Transit peptide</keyword>
<dbReference type="EC" id="3.1.-.-" evidence="8"/>
<dbReference type="EMBL" id="AF289485">
    <property type="protein sequence ID" value="AAG17847.1"/>
    <property type="molecule type" value="mRNA"/>
</dbReference>
<dbReference type="EMBL" id="AC073611">
    <property type="status" value="NOT_ANNOTATED_CDS"/>
    <property type="molecule type" value="Genomic_DNA"/>
</dbReference>
<dbReference type="EMBL" id="CH471054">
    <property type="protein sequence ID" value="EAW96688.1"/>
    <property type="molecule type" value="Genomic_DNA"/>
</dbReference>
<dbReference type="EMBL" id="BC051871">
    <property type="protein sequence ID" value="AAH51871.1"/>
    <property type="molecule type" value="mRNA"/>
</dbReference>
<dbReference type="CCDS" id="CCDS31810.1"/>
<dbReference type="RefSeq" id="NP_067653.3">
    <property type="nucleotide sequence ID" value="NM_021640.3"/>
</dbReference>
<dbReference type="FunCoup" id="Q9HB07">
    <property type="interactions" value="4427"/>
</dbReference>
<dbReference type="IntAct" id="Q9HB07">
    <property type="interactions" value="55"/>
</dbReference>
<dbReference type="MINT" id="Q9HB07"/>
<dbReference type="STRING" id="9606.ENSP00000267103"/>
<dbReference type="GlyGen" id="Q9HB07">
    <property type="glycosylation" value="1 site, 1 O-linked glycan (1 site)"/>
</dbReference>
<dbReference type="iPTMnet" id="Q9HB07"/>
<dbReference type="MetOSite" id="Q9HB07"/>
<dbReference type="PhosphoSitePlus" id="Q9HB07"/>
<dbReference type="SwissPalm" id="Q9HB07"/>
<dbReference type="BioMuta" id="C12orf10"/>
<dbReference type="DMDM" id="296439232"/>
<dbReference type="REPRODUCTION-2DPAGE" id="IPI00029444"/>
<dbReference type="jPOST" id="Q9HB07"/>
<dbReference type="MassIVE" id="Q9HB07"/>
<dbReference type="PaxDb" id="9606-ENSP00000267103"/>
<dbReference type="PeptideAtlas" id="Q9HB07"/>
<dbReference type="ProteomicsDB" id="81466"/>
<dbReference type="Pumba" id="Q9HB07"/>
<dbReference type="Antibodypedia" id="48361">
    <property type="antibodies" value="37 antibodies from 12 providers"/>
</dbReference>
<dbReference type="DNASU" id="60314"/>
<dbReference type="Ensembl" id="ENST00000267103.10">
    <property type="protein sequence ID" value="ENSP00000267103.5"/>
    <property type="gene ID" value="ENSG00000139637.14"/>
</dbReference>
<dbReference type="Ensembl" id="ENST00000708949.1">
    <property type="protein sequence ID" value="ENSP00000517432.1"/>
    <property type="gene ID" value="ENSG00000291835.1"/>
</dbReference>
<dbReference type="GeneID" id="60314"/>
<dbReference type="KEGG" id="hsa:60314"/>
<dbReference type="MANE-Select" id="ENST00000267103.10">
    <property type="protein sequence ID" value="ENSP00000267103.5"/>
    <property type="RefSeq nucleotide sequence ID" value="NM_021640.4"/>
    <property type="RefSeq protein sequence ID" value="NP_067653.4"/>
</dbReference>
<dbReference type="UCSC" id="uc001scp.5">
    <property type="organism name" value="human"/>
</dbReference>
<dbReference type="AGR" id="HGNC:17590"/>
<dbReference type="CTD" id="60314"/>
<dbReference type="DisGeNET" id="60314"/>
<dbReference type="GeneCards" id="MYG1"/>
<dbReference type="HGNC" id="HGNC:17590">
    <property type="gene designation" value="MYG1"/>
</dbReference>
<dbReference type="HPA" id="ENSG00000139637">
    <property type="expression patterns" value="Low tissue specificity"/>
</dbReference>
<dbReference type="MIM" id="611366">
    <property type="type" value="gene"/>
</dbReference>
<dbReference type="neXtProt" id="NX_Q9HB07"/>
<dbReference type="VEuPathDB" id="HostDB:ENSG00000139637"/>
<dbReference type="eggNOG" id="KOG2948">
    <property type="taxonomic scope" value="Eukaryota"/>
</dbReference>
<dbReference type="InParanoid" id="Q9HB07"/>
<dbReference type="OrthoDB" id="10265310at2759"/>
<dbReference type="PAN-GO" id="Q9HB07">
    <property type="GO annotations" value="2 GO annotations based on evolutionary models"/>
</dbReference>
<dbReference type="PhylomeDB" id="Q9HB07"/>
<dbReference type="TreeFam" id="TF313313"/>
<dbReference type="PathwayCommons" id="Q9HB07"/>
<dbReference type="SignaLink" id="Q9HB07"/>
<dbReference type="BioGRID-ORCS" id="60314">
    <property type="hits" value="45 hits in 1152 CRISPR screens"/>
</dbReference>
<dbReference type="ChiTaRS" id="C12orf10">
    <property type="organism name" value="human"/>
</dbReference>
<dbReference type="GenomeRNAi" id="60314"/>
<dbReference type="Pharos" id="Q9HB07">
    <property type="development level" value="Tbio"/>
</dbReference>
<dbReference type="PRO" id="PR:Q9HB07"/>
<dbReference type="Proteomes" id="UP000005640">
    <property type="component" value="Chromosome 12"/>
</dbReference>
<dbReference type="RNAct" id="Q9HB07">
    <property type="molecule type" value="protein"/>
</dbReference>
<dbReference type="Bgee" id="ENSG00000139637">
    <property type="expression patterns" value="Expressed in primary visual cortex and 100 other cell types or tissues"/>
</dbReference>
<dbReference type="ExpressionAtlas" id="Q9HB07">
    <property type="expression patterns" value="baseline and differential"/>
</dbReference>
<dbReference type="GO" id="GO:0005737">
    <property type="term" value="C:cytoplasm"/>
    <property type="evidence" value="ECO:0000318"/>
    <property type="project" value="GO_Central"/>
</dbReference>
<dbReference type="GO" id="GO:0005759">
    <property type="term" value="C:mitochondrial matrix"/>
    <property type="evidence" value="ECO:0000314"/>
    <property type="project" value="FlyBase"/>
</dbReference>
<dbReference type="GO" id="GO:0005739">
    <property type="term" value="C:mitochondrion"/>
    <property type="evidence" value="ECO:0000314"/>
    <property type="project" value="UniProtKB"/>
</dbReference>
<dbReference type="GO" id="GO:0005730">
    <property type="term" value="C:nucleolus"/>
    <property type="evidence" value="ECO:0000314"/>
    <property type="project" value="FlyBase"/>
</dbReference>
<dbReference type="GO" id="GO:0005654">
    <property type="term" value="C:nucleoplasm"/>
    <property type="evidence" value="ECO:0000314"/>
    <property type="project" value="FlyBase"/>
</dbReference>
<dbReference type="GO" id="GO:0005634">
    <property type="term" value="C:nucleus"/>
    <property type="evidence" value="ECO:0000314"/>
    <property type="project" value="UniProtKB"/>
</dbReference>
<dbReference type="GO" id="GO:0000175">
    <property type="term" value="F:3'-5'-RNA exonuclease activity"/>
    <property type="evidence" value="ECO:0000314"/>
    <property type="project" value="FlyBase"/>
</dbReference>
<dbReference type="GO" id="GO:0035641">
    <property type="term" value="P:locomotory exploration behavior"/>
    <property type="evidence" value="ECO:0007669"/>
    <property type="project" value="Ensembl"/>
</dbReference>
<dbReference type="GO" id="GO:0000959">
    <property type="term" value="P:mitochondrial RNA metabolic process"/>
    <property type="evidence" value="ECO:0000315"/>
    <property type="project" value="FlyBase"/>
</dbReference>
<dbReference type="GO" id="GO:0006397">
    <property type="term" value="P:mRNA processing"/>
    <property type="evidence" value="ECO:0000315"/>
    <property type="project" value="FlyBase"/>
</dbReference>
<dbReference type="GO" id="GO:0006364">
    <property type="term" value="P:rRNA processing"/>
    <property type="evidence" value="ECO:0000315"/>
    <property type="project" value="FlyBase"/>
</dbReference>
<dbReference type="InterPro" id="IPR003226">
    <property type="entry name" value="MYG1_exonuclease"/>
</dbReference>
<dbReference type="PANTHER" id="PTHR11215">
    <property type="entry name" value="METAL DEPENDENT HYDROLASE - RELATED"/>
    <property type="match status" value="1"/>
</dbReference>
<dbReference type="PANTHER" id="PTHR11215:SF1">
    <property type="entry name" value="MYG1 EXONUCLEASE"/>
    <property type="match status" value="1"/>
</dbReference>
<dbReference type="Pfam" id="PF03690">
    <property type="entry name" value="MYG1_exonuc"/>
    <property type="match status" value="1"/>
</dbReference>
<reference key="1">
    <citation type="submission" date="2000-07" db="EMBL/GenBank/DDBJ databases">
        <title>The human homologue of MYG1 the highly conserved gene from autonomously proliferating mouse melanocytes.</title>
        <authorList>
            <person name="Smicun Y."/>
        </authorList>
    </citation>
    <scope>NUCLEOTIDE SEQUENCE [MRNA]</scope>
</reference>
<reference key="2">
    <citation type="journal article" date="2006" name="Nature">
        <title>The finished DNA sequence of human chromosome 12.</title>
        <authorList>
            <person name="Scherer S.E."/>
            <person name="Muzny D.M."/>
            <person name="Buhay C.J."/>
            <person name="Chen R."/>
            <person name="Cree A."/>
            <person name="Ding Y."/>
            <person name="Dugan-Rocha S."/>
            <person name="Gill R."/>
            <person name="Gunaratne P."/>
            <person name="Harris R.A."/>
            <person name="Hawes A.C."/>
            <person name="Hernandez J."/>
            <person name="Hodgson A.V."/>
            <person name="Hume J."/>
            <person name="Jackson A."/>
            <person name="Khan Z.M."/>
            <person name="Kovar-Smith C."/>
            <person name="Lewis L.R."/>
            <person name="Lozado R.J."/>
            <person name="Metzker M.L."/>
            <person name="Milosavljevic A."/>
            <person name="Miner G.R."/>
            <person name="Montgomery K.T."/>
            <person name="Morgan M.B."/>
            <person name="Nazareth L.V."/>
            <person name="Scott G."/>
            <person name="Sodergren E."/>
            <person name="Song X.-Z."/>
            <person name="Steffen D."/>
            <person name="Lovering R.C."/>
            <person name="Wheeler D.A."/>
            <person name="Worley K.C."/>
            <person name="Yuan Y."/>
            <person name="Zhang Z."/>
            <person name="Adams C.Q."/>
            <person name="Ansari-Lari M.A."/>
            <person name="Ayele M."/>
            <person name="Brown M.J."/>
            <person name="Chen G."/>
            <person name="Chen Z."/>
            <person name="Clerc-Blankenburg K.P."/>
            <person name="Davis C."/>
            <person name="Delgado O."/>
            <person name="Dinh H.H."/>
            <person name="Draper H."/>
            <person name="Gonzalez-Garay M.L."/>
            <person name="Havlak P."/>
            <person name="Jackson L.R."/>
            <person name="Jacob L.S."/>
            <person name="Kelly S.H."/>
            <person name="Li L."/>
            <person name="Li Z."/>
            <person name="Liu J."/>
            <person name="Liu W."/>
            <person name="Lu J."/>
            <person name="Maheshwari M."/>
            <person name="Nguyen B.-V."/>
            <person name="Okwuonu G.O."/>
            <person name="Pasternak S."/>
            <person name="Perez L.M."/>
            <person name="Plopper F.J.H."/>
            <person name="Santibanez J."/>
            <person name="Shen H."/>
            <person name="Tabor P.E."/>
            <person name="Verduzco D."/>
            <person name="Waldron L."/>
            <person name="Wang Q."/>
            <person name="Williams G.A."/>
            <person name="Zhang J."/>
            <person name="Zhou J."/>
            <person name="Allen C.C."/>
            <person name="Amin A.G."/>
            <person name="Anyalebechi V."/>
            <person name="Bailey M."/>
            <person name="Barbaria J.A."/>
            <person name="Bimage K.E."/>
            <person name="Bryant N.P."/>
            <person name="Burch P.E."/>
            <person name="Burkett C.E."/>
            <person name="Burrell K.L."/>
            <person name="Calderon E."/>
            <person name="Cardenas V."/>
            <person name="Carter K."/>
            <person name="Casias K."/>
            <person name="Cavazos I."/>
            <person name="Cavazos S.R."/>
            <person name="Ceasar H."/>
            <person name="Chacko J."/>
            <person name="Chan S.N."/>
            <person name="Chavez D."/>
            <person name="Christopoulos C."/>
            <person name="Chu J."/>
            <person name="Cockrell R."/>
            <person name="Cox C.D."/>
            <person name="Dang M."/>
            <person name="Dathorne S.R."/>
            <person name="David R."/>
            <person name="Davis C.M."/>
            <person name="Davy-Carroll L."/>
            <person name="Deshazo D.R."/>
            <person name="Donlin J.E."/>
            <person name="D'Souza L."/>
            <person name="Eaves K.A."/>
            <person name="Egan A."/>
            <person name="Emery-Cohen A.J."/>
            <person name="Escotto M."/>
            <person name="Flagg N."/>
            <person name="Forbes L.D."/>
            <person name="Gabisi A.M."/>
            <person name="Garza M."/>
            <person name="Hamilton C."/>
            <person name="Henderson N."/>
            <person name="Hernandez O."/>
            <person name="Hines S."/>
            <person name="Hogues M.E."/>
            <person name="Huang M."/>
            <person name="Idlebird D.G."/>
            <person name="Johnson R."/>
            <person name="Jolivet A."/>
            <person name="Jones S."/>
            <person name="Kagan R."/>
            <person name="King L.M."/>
            <person name="Leal B."/>
            <person name="Lebow H."/>
            <person name="Lee S."/>
            <person name="LeVan J.M."/>
            <person name="Lewis L.C."/>
            <person name="London P."/>
            <person name="Lorensuhewa L.M."/>
            <person name="Loulseged H."/>
            <person name="Lovett D.A."/>
            <person name="Lucier A."/>
            <person name="Lucier R.L."/>
            <person name="Ma J."/>
            <person name="Madu R.C."/>
            <person name="Mapua P."/>
            <person name="Martindale A.D."/>
            <person name="Martinez E."/>
            <person name="Massey E."/>
            <person name="Mawhiney S."/>
            <person name="Meador M.G."/>
            <person name="Mendez S."/>
            <person name="Mercado C."/>
            <person name="Mercado I.C."/>
            <person name="Merritt C.E."/>
            <person name="Miner Z.L."/>
            <person name="Minja E."/>
            <person name="Mitchell T."/>
            <person name="Mohabbat F."/>
            <person name="Mohabbat K."/>
            <person name="Montgomery B."/>
            <person name="Moore N."/>
            <person name="Morris S."/>
            <person name="Munidasa M."/>
            <person name="Ngo R.N."/>
            <person name="Nguyen N.B."/>
            <person name="Nickerson E."/>
            <person name="Nwaokelemeh O.O."/>
            <person name="Nwokenkwo S."/>
            <person name="Obregon M."/>
            <person name="Oguh M."/>
            <person name="Oragunye N."/>
            <person name="Oviedo R.J."/>
            <person name="Parish B.J."/>
            <person name="Parker D.N."/>
            <person name="Parrish J."/>
            <person name="Parks K.L."/>
            <person name="Paul H.A."/>
            <person name="Payton B.A."/>
            <person name="Perez A."/>
            <person name="Perrin W."/>
            <person name="Pickens A."/>
            <person name="Primus E.L."/>
            <person name="Pu L.-L."/>
            <person name="Puazo M."/>
            <person name="Quiles M.M."/>
            <person name="Quiroz J.B."/>
            <person name="Rabata D."/>
            <person name="Reeves K."/>
            <person name="Ruiz S.J."/>
            <person name="Shao H."/>
            <person name="Sisson I."/>
            <person name="Sonaike T."/>
            <person name="Sorelle R.P."/>
            <person name="Sutton A.E."/>
            <person name="Svatek A.F."/>
            <person name="Svetz L.A."/>
            <person name="Tamerisa K.S."/>
            <person name="Taylor T.R."/>
            <person name="Teague B."/>
            <person name="Thomas N."/>
            <person name="Thorn R.D."/>
            <person name="Trejos Z.Y."/>
            <person name="Trevino B.K."/>
            <person name="Ukegbu O.N."/>
            <person name="Urban J.B."/>
            <person name="Vasquez L.I."/>
            <person name="Vera V.A."/>
            <person name="Villasana D.M."/>
            <person name="Wang L."/>
            <person name="Ward-Moore S."/>
            <person name="Warren J.T."/>
            <person name="Wei X."/>
            <person name="White F."/>
            <person name="Williamson A.L."/>
            <person name="Wleczyk R."/>
            <person name="Wooden H.S."/>
            <person name="Wooden S.H."/>
            <person name="Yen J."/>
            <person name="Yoon L."/>
            <person name="Yoon V."/>
            <person name="Zorrilla S.E."/>
            <person name="Nelson D."/>
            <person name="Kucherlapati R."/>
            <person name="Weinstock G."/>
            <person name="Gibbs R.A."/>
        </authorList>
    </citation>
    <scope>NUCLEOTIDE SEQUENCE [LARGE SCALE GENOMIC DNA]</scope>
</reference>
<reference key="3">
    <citation type="submission" date="2005-07" db="EMBL/GenBank/DDBJ databases">
        <authorList>
            <person name="Mural R.J."/>
            <person name="Istrail S."/>
            <person name="Sutton G.G."/>
            <person name="Florea L."/>
            <person name="Halpern A.L."/>
            <person name="Mobarry C.M."/>
            <person name="Lippert R."/>
            <person name="Walenz B."/>
            <person name="Shatkay H."/>
            <person name="Dew I."/>
            <person name="Miller J.R."/>
            <person name="Flanigan M.J."/>
            <person name="Edwards N.J."/>
            <person name="Bolanos R."/>
            <person name="Fasulo D."/>
            <person name="Halldorsson B.V."/>
            <person name="Hannenhalli S."/>
            <person name="Turner R."/>
            <person name="Yooseph S."/>
            <person name="Lu F."/>
            <person name="Nusskern D.R."/>
            <person name="Shue B.C."/>
            <person name="Zheng X.H."/>
            <person name="Zhong F."/>
            <person name="Delcher A.L."/>
            <person name="Huson D.H."/>
            <person name="Kravitz S.A."/>
            <person name="Mouchard L."/>
            <person name="Reinert K."/>
            <person name="Remington K.A."/>
            <person name="Clark A.G."/>
            <person name="Waterman M.S."/>
            <person name="Eichler E.E."/>
            <person name="Adams M.D."/>
            <person name="Hunkapiller M.W."/>
            <person name="Myers E.W."/>
            <person name="Venter J.C."/>
        </authorList>
    </citation>
    <scope>NUCLEOTIDE SEQUENCE [LARGE SCALE GENOMIC DNA]</scope>
</reference>
<reference evidence="11" key="4">
    <citation type="journal article" date="2004" name="Genome Res.">
        <title>The status, quality, and expansion of the NIH full-length cDNA project: the Mammalian Gene Collection (MGC).</title>
        <authorList>
            <consortium name="The MGC Project Team"/>
        </authorList>
    </citation>
    <scope>NUCLEOTIDE SEQUENCE [LARGE SCALE MRNA]</scope>
    <source>
        <tissue evidence="11">Brain</tissue>
    </source>
</reference>
<reference key="5">
    <citation type="journal article" date="2009" name="Biol. Cell">
        <title>Characterization of MYG1 gene and protein: subcellular distribution and function.</title>
        <authorList>
            <person name="Philips M.-A."/>
            <person name="Vikesaa J."/>
            <person name="Luuk H."/>
            <person name="Joenson L."/>
            <person name="Lillevaeli K."/>
            <person name="Rehfeld J.F."/>
            <person name="Vasar E."/>
            <person name="Koks S."/>
            <person name="Nielsen F.C."/>
        </authorList>
    </citation>
    <scope>TISSUE SPECIFICITY</scope>
    <scope>SUBCELLULAR LOCATION</scope>
</reference>
<reference key="6">
    <citation type="journal article" date="2009" name="Science">
        <title>Lysine acetylation targets protein complexes and co-regulates major cellular functions.</title>
        <authorList>
            <person name="Choudhary C."/>
            <person name="Kumar C."/>
            <person name="Gnad F."/>
            <person name="Nielsen M.L."/>
            <person name="Rehman M."/>
            <person name="Walther T.C."/>
            <person name="Olsen J.V."/>
            <person name="Mann M."/>
        </authorList>
    </citation>
    <scope>ACETYLATION [LARGE SCALE ANALYSIS] AT LYS-267</scope>
    <scope>IDENTIFICATION BY MASS SPECTROMETRY [LARGE SCALE ANALYSIS]</scope>
</reference>
<reference key="7">
    <citation type="journal article" date="2011" name="BMC Syst. Biol.">
        <title>Initial characterization of the human central proteome.</title>
        <authorList>
            <person name="Burkard T.R."/>
            <person name="Planyavsky M."/>
            <person name="Kaupe I."/>
            <person name="Breitwieser F.P."/>
            <person name="Buerckstuemmer T."/>
            <person name="Bennett K.L."/>
            <person name="Superti-Furga G."/>
            <person name="Colinge J."/>
        </authorList>
    </citation>
    <scope>IDENTIFICATION BY MASS SPECTROMETRY [LARGE SCALE ANALYSIS]</scope>
</reference>
<reference key="8">
    <citation type="journal article" date="2013" name="J. Proteome Res.">
        <title>Toward a comprehensive characterization of a human cancer cell phosphoproteome.</title>
        <authorList>
            <person name="Zhou H."/>
            <person name="Di Palma S."/>
            <person name="Preisinger C."/>
            <person name="Peng M."/>
            <person name="Polat A.N."/>
            <person name="Heck A.J."/>
            <person name="Mohammed S."/>
        </authorList>
    </citation>
    <scope>PHOSPHORYLATION [LARGE SCALE ANALYSIS] AT SER-120</scope>
    <scope>IDENTIFICATION BY MASS SPECTROMETRY [LARGE SCALE ANALYSIS]</scope>
    <source>
        <tissue>Cervix carcinoma</tissue>
    </source>
</reference>
<reference key="9">
    <citation type="journal article" date="2019" name="Nucleic Acids Res.">
        <title>Myg1 exonuclease couples the nuclear and mitochondrial translational programs through RNA processing.</title>
        <authorList>
            <person name="Grover R."/>
            <person name="Burse S.A."/>
            <person name="Shankrit S."/>
            <person name="Aggarwal A."/>
            <person name="Kirty K."/>
            <person name="Narta K."/>
            <person name="Srivastav R."/>
            <person name="Ray A.K."/>
            <person name="Malik G."/>
            <person name="Vats A."/>
            <person name="Motiani R.K."/>
            <person name="Thukral L."/>
            <person name="Roy S.S."/>
            <person name="Bhattacharya S."/>
            <person name="Sharma R."/>
            <person name="Natarajan K."/>
            <person name="Mukerji M."/>
            <person name="Pandey R."/>
            <person name="Gokhale R.S."/>
            <person name="Natarajan V.T."/>
        </authorList>
    </citation>
    <scope>FUNCTION</scope>
    <scope>MUTAGENESIS OF 106-ASP--HIS-108 AND HIS-344</scope>
    <scope>INVOLVEMENT IN VITILIGO</scope>
</reference>
<reference key="10">
    <citation type="journal article" date="2010" name="BMC Med. Genet.">
        <title>Promoter polymorphism -119C/G in MYG1 (C12orf10) gene is related to vitiligo susceptibility and Arg4Gln affects mitochondrial entrance of Myg1.</title>
        <authorList>
            <person name="Philips M.A."/>
            <person name="Kingo K."/>
            <person name="Karelson M."/>
            <person name="Raetsep R."/>
            <person name="Aunin E."/>
            <person name="Reimann E."/>
            <person name="Reemann P."/>
            <person name="Porosaar O."/>
            <person name="Vikesaa J."/>
            <person name="Nielsen F.C."/>
            <person name="Vasar E."/>
            <person name="Silm H."/>
            <person name="Koks S."/>
        </authorList>
    </citation>
    <scope>INVOLVEMENT IN VITILIGO</scope>
    <scope>VARIANT GLN-4</scope>
    <scope>CHARACTERIZATION OF VARIANT GLN-4</scope>
    <scope>SUBCELLULAR LOCATION</scope>
</reference>
<reference key="11">
    <citation type="journal article" date="2019" name="J. Eur. Acad. Dermatol. Venereol.">
        <title>Polymorphisms in melanocortin system and MYG1 genes are associated with vitiligo.</title>
        <authorList>
            <person name="Traks T."/>
            <person name="Keermann M."/>
            <person name="Karelson M."/>
            <person name="Raetsep R."/>
            <person name="Reimann E."/>
            <person name="Silm H."/>
            <person name="Vasar E."/>
            <person name="Koks S."/>
            <person name="Kingo K."/>
        </authorList>
    </citation>
    <scope>INVOLVEMENT IN VITILIGO</scope>
</reference>
<sequence length="376" mass="42508">MGHRFLRGLLTLLLPPPPLYTRHRMLGPESVPPPKRSRSKLMAPPRIGTHNGTFHCDEALACALLRLLPEYRDAEIVRTRDPEKLASCDIVVDVGGEYDPRRHRYDHHQRSFTETMSSLSPGKPWQTKLSSAGLIYLHFGHKLLAQLLGTSEEDSMVGTLYDKMYENFVEEVDAVDNGISQWAEGEPRYALTTTLSARVARLNPTWNHPDQDTEAGFKRAMDLVQEEFLQRLDFYQHSWLPARALVEEALAQRFQVDPSGEIVELAKGACPWKEHLYHLESGLSPPVAIFFVIYTDQAGQWRIQCVPKEPHSFQSRLPLPEPWRGLRDEALDQVSGIPGCIFVHASGFIGGHRTREGALSMARATLAQRSYLPQIS</sequence>
<accession>Q9HB07</accession>
<accession>Q86UA3</accession>
<proteinExistence type="evidence at protein level"/>
<name>MYG1_HUMAN</name>